<feature type="chain" id="PRO_0000079046" description="Nucleoprotein">
    <location>
        <begin position="1"/>
        <end position="498"/>
    </location>
</feature>
<feature type="region of interest" description="Disordered" evidence="2">
    <location>
        <begin position="1"/>
        <end position="21"/>
    </location>
</feature>
<feature type="short sequence motif" description="Unconventional nuclear localization signal" evidence="1">
    <location>
        <begin position="1"/>
        <end position="18"/>
    </location>
</feature>
<feature type="short sequence motif" description="Bipartite nuclear localization signal" evidence="1">
    <location>
        <begin position="198"/>
        <end position="216"/>
    </location>
</feature>
<organismHost>
    <name type="scientific">Aves</name>
    <dbReference type="NCBI Taxonomy" id="8782"/>
</organismHost>
<organismHost>
    <name type="scientific">Equus caballus</name>
    <name type="common">Horse</name>
    <dbReference type="NCBI Taxonomy" id="9796"/>
</organismHost>
<organismHost>
    <name type="scientific">Homo sapiens</name>
    <name type="common">Human</name>
    <dbReference type="NCBI Taxonomy" id="9606"/>
</organismHost>
<organismHost>
    <name type="scientific">Phocidae</name>
    <name type="common">true seals</name>
    <dbReference type="NCBI Taxonomy" id="9709"/>
</organismHost>
<comment type="function">
    <text evidence="1">Encapsidates the negative strand viral RNA, protecting it from nucleases. The encapsidated genomic RNA is termed the ribonucleoprotein (RNP) and serves as template for transcription and replication. The RNP needs to be localized in the host nucleus to start an infectious cycle, but is too large to diffuse through the nuclear pore complex. NP comprises at least 2 nuclear localization signals that are responsible for the active RNP import into the nucleus through cellular importin alpha/beta pathway. Later in the infection, nclear export of RNPs are mediated through viral proteins NEP interacting with M1 which binds nucleoproteins. It is possible that nucleoprotein binds directly host exportin-1/XPO1 and plays an active role in RNPs nuclear export. M1 interaction with RNP seems to hide nucleoprotein's nuclear localization signals. Soon after a virion infects a new cell, M1 dissociates from the RNP under acidification of the virion driven by M2 protein. Dissociation of M1 from RNP unmasks nucleoprotein's nuclear localization signals, targeting the RNP to the nucleus.</text>
</comment>
<comment type="subunit">
    <text evidence="1">Homomultimerizes to form the nucleocapsid. May bind host exportin-1/XPO1. Binds to viral genomic RNA. Protein-RNA contacts are mediated by a combination of electrostatic interactions between positively charged residues and the phosphate backbone and planar interactions between aromatic side chains and bases.</text>
</comment>
<comment type="subcellular location">
    <subcellularLocation>
        <location evidence="1">Virion</location>
    </subcellularLocation>
    <subcellularLocation>
        <location evidence="1">Host nucleus</location>
    </subcellularLocation>
</comment>
<comment type="PTM">
    <text evidence="1">Late in virus-infected cells, may be cleaved from a 56-kDa protein to a 53-kDa protein by a cellular caspase. This cleavage might be a marker for the onset of apoptosis in infected cells or have a specific function in virus host interaction.</text>
</comment>
<comment type="similarity">
    <text evidence="1">Belongs to the influenza viruses nucleoprotein family.</text>
</comment>
<reference key="1">
    <citation type="journal article" date="1991" name="J. Virol.">
        <title>Evolution of influenza A virus nucleoprotein genes: implications for the origins of H1N1 human and classical swine viruses.</title>
        <authorList>
            <person name="Gorman O.T."/>
            <person name="Bean W.J."/>
            <person name="Kawaoka Y."/>
            <person name="Donatelli I."/>
            <person name="Guo Y."/>
            <person name="Webster R.G."/>
        </authorList>
    </citation>
    <scope>NUCLEOTIDE SEQUENCE [GENOMIC RNA]</scope>
</reference>
<name>NCAP_I27A0</name>
<sequence length="498" mass="56224">MASQGTKRSYEQMETGGERQNATEIRASVGRMVGGIGRFYIQMCTELKLSDYEGRLIQNSITIERMVLSAFDERRNKYLEEHPSAGKDPKKTGGPIYRRRDGKWVRELILYDKEEIRRIWRQANNGEDATAGLTHLMIWHSNLNDATYQRTRALVRTGMDPRMCSLMQGSTLPRRSGAAGAAVKGVGTMVMELVRMIKRGINDRNFWRGENGRRTRVAYERMCNILKGKFQTAAQRAMMDQVRESRNPGNAEIEDLIFLARSALILRGSVAHKSCLPACVYGLAVASGYDFEREGYSLVGIDPFRLLQNSQVFSLIRPNENPAHKSQLVWMACHSAAFEDLRVSSFIRGTRVVPRGQLSTRGVQIASNENMETMDSNTLELRSRYWAIRTRSGGSTNQQKSSAGQISVQPTFSVQRNLPFERATIMAAFTGNTEGRISDMRTEIIRMMESARPEDVSFQGRGVFELSDEKATNPIVPSFDMSNEGSYFFGDNAEEYDN</sequence>
<evidence type="ECO:0000255" key="1">
    <source>
        <dbReference type="HAMAP-Rule" id="MF_04070"/>
    </source>
</evidence>
<evidence type="ECO:0000256" key="2">
    <source>
        <dbReference type="SAM" id="MobiDB-lite"/>
    </source>
</evidence>
<gene>
    <name evidence="1" type="primary">NP</name>
</gene>
<proteinExistence type="inferred from homology"/>
<dbReference type="EMBL" id="M63779">
    <property type="protein sequence ID" value="AAA52240.1"/>
    <property type="molecule type" value="Genomic_RNA"/>
</dbReference>
<dbReference type="SMR" id="P26061"/>
<dbReference type="GO" id="GO:0019029">
    <property type="term" value="C:helical viral capsid"/>
    <property type="evidence" value="ECO:0007669"/>
    <property type="project" value="UniProtKB-UniRule"/>
</dbReference>
<dbReference type="GO" id="GO:0043657">
    <property type="term" value="C:host cell"/>
    <property type="evidence" value="ECO:0007669"/>
    <property type="project" value="GOC"/>
</dbReference>
<dbReference type="GO" id="GO:0042025">
    <property type="term" value="C:host cell nucleus"/>
    <property type="evidence" value="ECO:0007669"/>
    <property type="project" value="UniProtKB-SubCell"/>
</dbReference>
<dbReference type="GO" id="GO:1990904">
    <property type="term" value="C:ribonucleoprotein complex"/>
    <property type="evidence" value="ECO:0007669"/>
    <property type="project" value="UniProtKB-KW"/>
</dbReference>
<dbReference type="GO" id="GO:0019013">
    <property type="term" value="C:viral nucleocapsid"/>
    <property type="evidence" value="ECO:0007669"/>
    <property type="project" value="UniProtKB-UniRule"/>
</dbReference>
<dbReference type="GO" id="GO:0003723">
    <property type="term" value="F:RNA binding"/>
    <property type="evidence" value="ECO:0007669"/>
    <property type="project" value="UniProtKB-UniRule"/>
</dbReference>
<dbReference type="GO" id="GO:0005198">
    <property type="term" value="F:structural molecule activity"/>
    <property type="evidence" value="ECO:0007669"/>
    <property type="project" value="UniProtKB-UniRule"/>
</dbReference>
<dbReference type="GO" id="GO:0046718">
    <property type="term" value="P:symbiont entry into host cell"/>
    <property type="evidence" value="ECO:0007669"/>
    <property type="project" value="UniProtKB-KW"/>
</dbReference>
<dbReference type="GO" id="GO:0075732">
    <property type="term" value="P:viral penetration into host nucleus"/>
    <property type="evidence" value="ECO:0007669"/>
    <property type="project" value="UniProtKB-UniRule"/>
</dbReference>
<dbReference type="HAMAP" id="MF_04070">
    <property type="entry name" value="INFV_NCAP"/>
    <property type="match status" value="1"/>
</dbReference>
<dbReference type="InterPro" id="IPR002141">
    <property type="entry name" value="Flu_NP"/>
</dbReference>
<dbReference type="Pfam" id="PF00506">
    <property type="entry name" value="Flu_NP"/>
    <property type="match status" value="1"/>
</dbReference>
<dbReference type="SUPFAM" id="SSF161003">
    <property type="entry name" value="flu NP-like"/>
    <property type="match status" value="1"/>
</dbReference>
<keyword id="KW-0167">Capsid protein</keyword>
<keyword id="KW-1139">Helical capsid protein</keyword>
<keyword id="KW-1048">Host nucleus</keyword>
<keyword id="KW-0945">Host-virus interaction</keyword>
<keyword id="KW-0687">Ribonucleoprotein</keyword>
<keyword id="KW-0694">RNA-binding</keyword>
<keyword id="KW-0543">Viral nucleoprotein</keyword>
<keyword id="KW-1163">Viral penetration into host nucleus</keyword>
<keyword id="KW-0946">Virion</keyword>
<keyword id="KW-1160">Virus entry into host cell</keyword>
<organism>
    <name type="scientific">Influenza A virus (strain A/Fowl plague virus/Dobson/'Dutch'/1927 H7N7)</name>
    <dbReference type="NCBI Taxonomy" id="383551"/>
    <lineage>
        <taxon>Viruses</taxon>
        <taxon>Riboviria</taxon>
        <taxon>Orthornavirae</taxon>
        <taxon>Negarnaviricota</taxon>
        <taxon>Polyploviricotina</taxon>
        <taxon>Insthoviricetes</taxon>
        <taxon>Articulavirales</taxon>
        <taxon>Orthomyxoviridae</taxon>
        <taxon>Alphainfluenzavirus</taxon>
        <taxon>Alphainfluenzavirus influenzae</taxon>
        <taxon>Influenza A virus</taxon>
    </lineage>
</organism>
<accession>P26061</accession>
<protein>
    <recommendedName>
        <fullName evidence="1">Nucleoprotein</fullName>
    </recommendedName>
    <alternativeName>
        <fullName evidence="1">Nucleocapsid protein</fullName>
        <shortName evidence="1">Protein N</shortName>
    </alternativeName>
</protein>